<sequence>MAALSSGSSAEGASLFNGDMEPEPPPPVLGACYAGSGGGDPAIPEEVWNIKQMIKLTQEHIEALLDKFGGEHNPPSIYLEAYEEYTSKLDALQQREQQLLESMGNGTDFSVSSSASTDTVASSSSSSLSVAPSSLSVYQNPTDMSRNNPKSPQKPIVRVFLPNKQRTVVPARCGVTVRDSLKKALMMRGLIPECCAVYRIQDGEKKPIGWDTDISWLTGEELHVEVLENVPLTTHNFVRKTFFTLAFCDFCRKLLFQGFRCQTCGYKFHQRCSTEVPLMCVNYDQLDLLFVSKFFEHHPISQEETTLGETTPASGSYPSVPPSDSVGPPILPSPSPSKSIPIPQPFRPADEDHRNQFGQRDRSSSAPNVHINTIEPVNIDDLIRDQGVRGEGAPLNQLMRCLRKYQSRTPSPLLHSVPSEIVFDFEPGPVFRGSTAGLSATPPASLPGSLTNVKALQKSPGPQRERKSSSSSEDRNRMKTLGRRDSSDDWEIPDGQITVGQRIGSGSFGTVYKGKWHGDVAVKMLNVTAPTPQQLQAFKNEVGVLRKTRHVNILLFMGYSTKPQLAIVTQWCEGSSLYHHLHIIETKFEMIKLIDIARQTAQGMDYLHAKSIIHRDLKSNNIFLHEDLTVKIGDFGLATVKSRWSGSHQFEQLSGSILWMAPEVIRMQDKNPYSFQSDVYAFGIVLYELMTGQLPYSNINNRDQIIFMVGRGYLSPDLSKVRSNCPKAMKRLMAECLKKKRDERPLFPQILASIELLARSLPKIHRSASEPSLNRAGFQTEDFSLYACASPKTPIQAGGYGEFAAFK</sequence>
<accession>P34908</accession>
<dbReference type="EC" id="2.7.11.1" evidence="2"/>
<dbReference type="EMBL" id="M80846">
    <property type="protein sequence ID" value="AAA49493.1"/>
    <property type="molecule type" value="mRNA"/>
</dbReference>
<dbReference type="EMBL" id="M80845">
    <property type="protein sequence ID" value="AAA49492.1"/>
    <property type="molecule type" value="mRNA"/>
</dbReference>
<dbReference type="RefSeq" id="XP_015722279.1">
    <molecule id="P34908-2"/>
    <property type="nucleotide sequence ID" value="XM_015866793.2"/>
</dbReference>
<dbReference type="RefSeq" id="XP_032301555.1">
    <molecule id="P34908-1"/>
    <property type="nucleotide sequence ID" value="XM_032445664.1"/>
</dbReference>
<dbReference type="BMRB" id="P34908"/>
<dbReference type="SMR" id="P34908"/>
<dbReference type="iPTMnet" id="P34908"/>
<dbReference type="Ensembl" id="ENSCJPT00005035216.1">
    <molecule id="P34908-1"/>
    <property type="protein sequence ID" value="ENSCJPP00005025943.1"/>
    <property type="gene ID" value="ENSCJPG00005020278.1"/>
</dbReference>
<dbReference type="Ensembl" id="ENSCJPT00005035217.1">
    <molecule id="P34908-2"/>
    <property type="protein sequence ID" value="ENSCJPP00005025944.1"/>
    <property type="gene ID" value="ENSCJPG00005020278.1"/>
</dbReference>
<dbReference type="GeneID" id="107315883"/>
<dbReference type="KEGG" id="cjo:107315883"/>
<dbReference type="CTD" id="673"/>
<dbReference type="GeneTree" id="ENSGT00940000156154"/>
<dbReference type="OrthoDB" id="774951at2759"/>
<dbReference type="BRENDA" id="2.7.11.1">
    <property type="organism ID" value="1673"/>
</dbReference>
<dbReference type="Proteomes" id="UP000694412">
    <property type="component" value="Chromosome 1"/>
</dbReference>
<dbReference type="GO" id="GO:0044297">
    <property type="term" value="C:cell body"/>
    <property type="evidence" value="ECO:0007669"/>
    <property type="project" value="Ensembl"/>
</dbReference>
<dbReference type="GO" id="GO:0034451">
    <property type="term" value="C:centriolar satellite"/>
    <property type="evidence" value="ECO:0007669"/>
    <property type="project" value="Ensembl"/>
</dbReference>
<dbReference type="GO" id="GO:0036064">
    <property type="term" value="C:ciliary basal body"/>
    <property type="evidence" value="ECO:0007669"/>
    <property type="project" value="Ensembl"/>
</dbReference>
<dbReference type="GO" id="GO:0005829">
    <property type="term" value="C:cytosol"/>
    <property type="evidence" value="ECO:0007669"/>
    <property type="project" value="Ensembl"/>
</dbReference>
<dbReference type="GO" id="GO:0098978">
    <property type="term" value="C:glutamatergic synapse"/>
    <property type="evidence" value="ECO:0007669"/>
    <property type="project" value="Ensembl"/>
</dbReference>
<dbReference type="GO" id="GO:0005739">
    <property type="term" value="C:mitochondrion"/>
    <property type="evidence" value="ECO:0007669"/>
    <property type="project" value="Ensembl"/>
</dbReference>
<dbReference type="GO" id="GO:0043005">
    <property type="term" value="C:neuron projection"/>
    <property type="evidence" value="ECO:0007669"/>
    <property type="project" value="Ensembl"/>
</dbReference>
<dbReference type="GO" id="GO:0005634">
    <property type="term" value="C:nucleus"/>
    <property type="evidence" value="ECO:0007669"/>
    <property type="project" value="UniProtKB-SubCell"/>
</dbReference>
<dbReference type="GO" id="GO:0005886">
    <property type="term" value="C:plasma membrane"/>
    <property type="evidence" value="ECO:0007669"/>
    <property type="project" value="UniProtKB-SubCell"/>
</dbReference>
<dbReference type="GO" id="GO:0098794">
    <property type="term" value="C:postsynapse"/>
    <property type="evidence" value="ECO:0007669"/>
    <property type="project" value="GOC"/>
</dbReference>
<dbReference type="GO" id="GO:0098793">
    <property type="term" value="C:presynapse"/>
    <property type="evidence" value="ECO:0007669"/>
    <property type="project" value="GOC"/>
</dbReference>
<dbReference type="GO" id="GO:0005524">
    <property type="term" value="F:ATP binding"/>
    <property type="evidence" value="ECO:0007669"/>
    <property type="project" value="UniProtKB-KW"/>
</dbReference>
<dbReference type="GO" id="GO:0005509">
    <property type="term" value="F:calcium ion binding"/>
    <property type="evidence" value="ECO:0007669"/>
    <property type="project" value="Ensembl"/>
</dbReference>
<dbReference type="GO" id="GO:0042802">
    <property type="term" value="F:identical protein binding"/>
    <property type="evidence" value="ECO:0007669"/>
    <property type="project" value="Ensembl"/>
</dbReference>
<dbReference type="GO" id="GO:0004708">
    <property type="term" value="F:MAP kinase kinase activity"/>
    <property type="evidence" value="ECO:0007669"/>
    <property type="project" value="Ensembl"/>
</dbReference>
<dbReference type="GO" id="GO:0004709">
    <property type="term" value="F:MAP kinase kinase kinase activity"/>
    <property type="evidence" value="ECO:0007669"/>
    <property type="project" value="TreeGrafter"/>
</dbReference>
<dbReference type="GO" id="GO:0106310">
    <property type="term" value="F:protein serine kinase activity"/>
    <property type="evidence" value="ECO:0007669"/>
    <property type="project" value="RHEA"/>
</dbReference>
<dbReference type="GO" id="GO:0097110">
    <property type="term" value="F:scaffold protein binding"/>
    <property type="evidence" value="ECO:0007669"/>
    <property type="project" value="Ensembl"/>
</dbReference>
<dbReference type="GO" id="GO:0008270">
    <property type="term" value="F:zinc ion binding"/>
    <property type="evidence" value="ECO:0007669"/>
    <property type="project" value="UniProtKB-KW"/>
</dbReference>
<dbReference type="GO" id="GO:0043369">
    <property type="term" value="P:CD4-positive or CD8-positive, alpha-beta T cell lineage commitment"/>
    <property type="evidence" value="ECO:0007669"/>
    <property type="project" value="Ensembl"/>
</dbReference>
<dbReference type="GO" id="GO:0043367">
    <property type="term" value="P:CD4-positive, alpha-beta T cell differentiation"/>
    <property type="evidence" value="ECO:0007669"/>
    <property type="project" value="Ensembl"/>
</dbReference>
<dbReference type="GO" id="GO:0071277">
    <property type="term" value="P:cellular response to calcium ion"/>
    <property type="evidence" value="ECO:0007669"/>
    <property type="project" value="Ensembl"/>
</dbReference>
<dbReference type="GO" id="GO:0071466">
    <property type="term" value="P:cellular response to xenobiotic stimulus"/>
    <property type="evidence" value="ECO:0007669"/>
    <property type="project" value="Ensembl"/>
</dbReference>
<dbReference type="GO" id="GO:0072577">
    <property type="term" value="P:endothelial cell apoptotic process"/>
    <property type="evidence" value="ECO:0007669"/>
    <property type="project" value="Ensembl"/>
</dbReference>
<dbReference type="GO" id="GO:0007173">
    <property type="term" value="P:epidermal growth factor receptor signaling pathway"/>
    <property type="evidence" value="ECO:0007669"/>
    <property type="project" value="Ensembl"/>
</dbReference>
<dbReference type="GO" id="GO:0070371">
    <property type="term" value="P:ERK1 and ERK2 cascade"/>
    <property type="evidence" value="ECO:0007669"/>
    <property type="project" value="Ensembl"/>
</dbReference>
<dbReference type="GO" id="GO:0090150">
    <property type="term" value="P:establishment of protein localization to membrane"/>
    <property type="evidence" value="ECO:0007669"/>
    <property type="project" value="Ensembl"/>
</dbReference>
<dbReference type="GO" id="GO:0060324">
    <property type="term" value="P:face development"/>
    <property type="evidence" value="ECO:0007669"/>
    <property type="project" value="Ensembl"/>
</dbReference>
<dbReference type="GO" id="GO:0060323">
    <property type="term" value="P:head morphogenesis"/>
    <property type="evidence" value="ECO:0007669"/>
    <property type="project" value="Ensembl"/>
</dbReference>
<dbReference type="GO" id="GO:0060291">
    <property type="term" value="P:long-term synaptic potentiation"/>
    <property type="evidence" value="ECO:0007669"/>
    <property type="project" value="Ensembl"/>
</dbReference>
<dbReference type="GO" id="GO:0002318">
    <property type="term" value="P:myeloid progenitor cell differentiation"/>
    <property type="evidence" value="ECO:0007669"/>
    <property type="project" value="Ensembl"/>
</dbReference>
<dbReference type="GO" id="GO:2000352">
    <property type="term" value="P:negative regulation of endothelial cell apoptotic process"/>
    <property type="evidence" value="ECO:0007669"/>
    <property type="project" value="Ensembl"/>
</dbReference>
<dbReference type="GO" id="GO:0010764">
    <property type="term" value="P:negative regulation of fibroblast migration"/>
    <property type="evidence" value="ECO:0007669"/>
    <property type="project" value="Ensembl"/>
</dbReference>
<dbReference type="GO" id="GO:0043524">
    <property type="term" value="P:negative regulation of neuron apoptotic process"/>
    <property type="evidence" value="ECO:0007669"/>
    <property type="project" value="Ensembl"/>
</dbReference>
<dbReference type="GO" id="GO:2000301">
    <property type="term" value="P:negative regulation of synaptic vesicle exocytosis"/>
    <property type="evidence" value="ECO:0007669"/>
    <property type="project" value="Ensembl"/>
</dbReference>
<dbReference type="GO" id="GO:0048680">
    <property type="term" value="P:positive regulation of axon regeneration"/>
    <property type="evidence" value="ECO:0007669"/>
    <property type="project" value="Ensembl"/>
</dbReference>
<dbReference type="GO" id="GO:0050772">
    <property type="term" value="P:positive regulation of axonogenesis"/>
    <property type="evidence" value="ECO:0007669"/>
    <property type="project" value="Ensembl"/>
</dbReference>
<dbReference type="GO" id="GO:0010828">
    <property type="term" value="P:positive regulation of D-glucose transmembrane transport"/>
    <property type="evidence" value="ECO:0007669"/>
    <property type="project" value="Ensembl"/>
</dbReference>
<dbReference type="GO" id="GO:0070374">
    <property type="term" value="P:positive regulation of ERK1 and ERK2 cascade"/>
    <property type="evidence" value="ECO:0007669"/>
    <property type="project" value="Ensembl"/>
</dbReference>
<dbReference type="GO" id="GO:0010628">
    <property type="term" value="P:positive regulation of gene expression"/>
    <property type="evidence" value="ECO:0007669"/>
    <property type="project" value="Ensembl"/>
</dbReference>
<dbReference type="GO" id="GO:0051496">
    <property type="term" value="P:positive regulation of stress fiber assembly"/>
    <property type="evidence" value="ECO:0007669"/>
    <property type="project" value="Ensembl"/>
</dbReference>
<dbReference type="GO" id="GO:1900026">
    <property type="term" value="P:positive regulation of substrate adhesion-dependent cell spreading"/>
    <property type="evidence" value="ECO:0007669"/>
    <property type="project" value="Ensembl"/>
</dbReference>
<dbReference type="GO" id="GO:0099170">
    <property type="term" value="P:postsynaptic modulation of chemical synaptic transmission"/>
    <property type="evidence" value="ECO:0007669"/>
    <property type="project" value="Ensembl"/>
</dbReference>
<dbReference type="GO" id="GO:0042127">
    <property type="term" value="P:regulation of cell population proliferation"/>
    <property type="evidence" value="ECO:0007669"/>
    <property type="project" value="Ensembl"/>
</dbReference>
<dbReference type="GO" id="GO:0045580">
    <property type="term" value="P:regulation of T cell differentiation"/>
    <property type="evidence" value="ECO:0007669"/>
    <property type="project" value="Ensembl"/>
</dbReference>
<dbReference type="GO" id="GO:0035019">
    <property type="term" value="P:somatic stem cell population maintenance"/>
    <property type="evidence" value="ECO:0007669"/>
    <property type="project" value="Ensembl"/>
</dbReference>
<dbReference type="GO" id="GO:0043149">
    <property type="term" value="P:stress fiber assembly"/>
    <property type="evidence" value="ECO:0007669"/>
    <property type="project" value="Ensembl"/>
</dbReference>
<dbReference type="GO" id="GO:0034446">
    <property type="term" value="P:substrate adhesion-dependent cell spreading"/>
    <property type="evidence" value="ECO:0007669"/>
    <property type="project" value="Ensembl"/>
</dbReference>
<dbReference type="GO" id="GO:0016079">
    <property type="term" value="P:synaptic vesicle exocytosis"/>
    <property type="evidence" value="ECO:0007669"/>
    <property type="project" value="Ensembl"/>
</dbReference>
<dbReference type="GO" id="GO:0033077">
    <property type="term" value="P:T cell differentiation in thymus"/>
    <property type="evidence" value="ECO:0007669"/>
    <property type="project" value="Ensembl"/>
</dbReference>
<dbReference type="GO" id="GO:0050852">
    <property type="term" value="P:T cell receptor signaling pathway"/>
    <property type="evidence" value="ECO:0007669"/>
    <property type="project" value="Ensembl"/>
</dbReference>
<dbReference type="GO" id="GO:0048538">
    <property type="term" value="P:thymus development"/>
    <property type="evidence" value="ECO:0007669"/>
    <property type="project" value="Ensembl"/>
</dbReference>
<dbReference type="GO" id="GO:0030878">
    <property type="term" value="P:thyroid gland development"/>
    <property type="evidence" value="ECO:0007669"/>
    <property type="project" value="Ensembl"/>
</dbReference>
<dbReference type="GO" id="GO:0008542">
    <property type="term" value="P:visual learning"/>
    <property type="evidence" value="ECO:0007669"/>
    <property type="project" value="Ensembl"/>
</dbReference>
<dbReference type="CDD" id="cd20871">
    <property type="entry name" value="C1_B-Raf"/>
    <property type="match status" value="1"/>
</dbReference>
<dbReference type="CDD" id="cd17134">
    <property type="entry name" value="RBD_BRAF"/>
    <property type="match status" value="1"/>
</dbReference>
<dbReference type="CDD" id="cd14062">
    <property type="entry name" value="STKc_Raf"/>
    <property type="match status" value="1"/>
</dbReference>
<dbReference type="FunFam" id="3.10.20.90:FF:000015">
    <property type="entry name" value="B-Raf proto-oncogene serine/threonine-protein kinase"/>
    <property type="match status" value="1"/>
</dbReference>
<dbReference type="FunFam" id="3.30.200.20:FF:000024">
    <property type="entry name" value="B-Raf proto-oncogene serine/threonine-protein kinase"/>
    <property type="match status" value="1"/>
</dbReference>
<dbReference type="FunFam" id="3.30.60.20:FF:000004">
    <property type="entry name" value="B-Raf proto-oncogene serine/threonine-protein kinase"/>
    <property type="match status" value="1"/>
</dbReference>
<dbReference type="FunFam" id="1.10.510.10:FF:000036">
    <property type="entry name" value="RAF proto-oncogene serine/threonine-protein kinase"/>
    <property type="match status" value="1"/>
</dbReference>
<dbReference type="Gene3D" id="3.30.60.20">
    <property type="match status" value="1"/>
</dbReference>
<dbReference type="Gene3D" id="3.10.20.90">
    <property type="entry name" value="Phosphatidylinositol 3-kinase Catalytic Subunit, Chain A, domain 1"/>
    <property type="match status" value="1"/>
</dbReference>
<dbReference type="Gene3D" id="3.30.200.20">
    <property type="entry name" value="Phosphorylase Kinase, domain 1"/>
    <property type="match status" value="1"/>
</dbReference>
<dbReference type="Gene3D" id="1.10.510.10">
    <property type="entry name" value="Transferase(Phosphotransferase) domain 1"/>
    <property type="match status" value="1"/>
</dbReference>
<dbReference type="InterPro" id="IPR046349">
    <property type="entry name" value="C1-like_sf"/>
</dbReference>
<dbReference type="InterPro" id="IPR020454">
    <property type="entry name" value="DAG/PE-bd"/>
</dbReference>
<dbReference type="InterPro" id="IPR011009">
    <property type="entry name" value="Kinase-like_dom_sf"/>
</dbReference>
<dbReference type="InterPro" id="IPR002219">
    <property type="entry name" value="PE/DAG-bd"/>
</dbReference>
<dbReference type="InterPro" id="IPR000719">
    <property type="entry name" value="Prot_kinase_dom"/>
</dbReference>
<dbReference type="InterPro" id="IPR017441">
    <property type="entry name" value="Protein_kinase_ATP_BS"/>
</dbReference>
<dbReference type="InterPro" id="IPR003116">
    <property type="entry name" value="RBD_dom"/>
</dbReference>
<dbReference type="InterPro" id="IPR001245">
    <property type="entry name" value="Ser-Thr/Tyr_kinase_cat_dom"/>
</dbReference>
<dbReference type="InterPro" id="IPR008271">
    <property type="entry name" value="Ser/Thr_kinase_AS"/>
</dbReference>
<dbReference type="InterPro" id="IPR051681">
    <property type="entry name" value="Ser/Thr_Kinases-Pseudokinases"/>
</dbReference>
<dbReference type="InterPro" id="IPR029071">
    <property type="entry name" value="Ubiquitin-like_domsf"/>
</dbReference>
<dbReference type="PANTHER" id="PTHR44329">
    <property type="entry name" value="SERINE/THREONINE-PROTEIN KINASE TNNI3K-RELATED"/>
    <property type="match status" value="1"/>
</dbReference>
<dbReference type="PANTHER" id="PTHR44329:SF240">
    <property type="entry name" value="SERINE_THREONINE-PROTEIN KINASE B-RAF"/>
    <property type="match status" value="1"/>
</dbReference>
<dbReference type="Pfam" id="PF00130">
    <property type="entry name" value="C1_1"/>
    <property type="match status" value="1"/>
</dbReference>
<dbReference type="Pfam" id="PF07714">
    <property type="entry name" value="PK_Tyr_Ser-Thr"/>
    <property type="match status" value="1"/>
</dbReference>
<dbReference type="Pfam" id="PF02196">
    <property type="entry name" value="RBD"/>
    <property type="match status" value="1"/>
</dbReference>
<dbReference type="PRINTS" id="PR00008">
    <property type="entry name" value="DAGPEDOMAIN"/>
</dbReference>
<dbReference type="SMART" id="SM00109">
    <property type="entry name" value="C1"/>
    <property type="match status" value="1"/>
</dbReference>
<dbReference type="SMART" id="SM00455">
    <property type="entry name" value="RBD"/>
    <property type="match status" value="1"/>
</dbReference>
<dbReference type="SMART" id="SM00220">
    <property type="entry name" value="S_TKc"/>
    <property type="match status" value="1"/>
</dbReference>
<dbReference type="SUPFAM" id="SSF57889">
    <property type="entry name" value="Cysteine-rich domain"/>
    <property type="match status" value="1"/>
</dbReference>
<dbReference type="SUPFAM" id="SSF56112">
    <property type="entry name" value="Protein kinase-like (PK-like)"/>
    <property type="match status" value="1"/>
</dbReference>
<dbReference type="SUPFAM" id="SSF54236">
    <property type="entry name" value="Ubiquitin-like"/>
    <property type="match status" value="1"/>
</dbReference>
<dbReference type="PROSITE" id="PS00107">
    <property type="entry name" value="PROTEIN_KINASE_ATP"/>
    <property type="match status" value="1"/>
</dbReference>
<dbReference type="PROSITE" id="PS50011">
    <property type="entry name" value="PROTEIN_KINASE_DOM"/>
    <property type="match status" value="1"/>
</dbReference>
<dbReference type="PROSITE" id="PS00108">
    <property type="entry name" value="PROTEIN_KINASE_ST"/>
    <property type="match status" value="1"/>
</dbReference>
<dbReference type="PROSITE" id="PS50898">
    <property type="entry name" value="RBD"/>
    <property type="match status" value="1"/>
</dbReference>
<dbReference type="PROSITE" id="PS00479">
    <property type="entry name" value="ZF_DAG_PE_1"/>
    <property type="match status" value="1"/>
</dbReference>
<dbReference type="PROSITE" id="PS50081">
    <property type="entry name" value="ZF_DAG_PE_2"/>
    <property type="match status" value="1"/>
</dbReference>
<evidence type="ECO:0000250" key="1"/>
<evidence type="ECO:0000250" key="2">
    <source>
        <dbReference type="UniProtKB" id="P15056"/>
    </source>
</evidence>
<evidence type="ECO:0000250" key="3">
    <source>
        <dbReference type="UniProtKB" id="Q04982"/>
    </source>
</evidence>
<evidence type="ECO:0000255" key="4">
    <source>
        <dbReference type="PROSITE-ProRule" id="PRU00159"/>
    </source>
</evidence>
<evidence type="ECO:0000255" key="5">
    <source>
        <dbReference type="PROSITE-ProRule" id="PRU00226"/>
    </source>
</evidence>
<evidence type="ECO:0000255" key="6">
    <source>
        <dbReference type="PROSITE-ProRule" id="PRU00262"/>
    </source>
</evidence>
<evidence type="ECO:0000255" key="7">
    <source>
        <dbReference type="PROSITE-ProRule" id="PRU10027"/>
    </source>
</evidence>
<evidence type="ECO:0000256" key="8">
    <source>
        <dbReference type="SAM" id="MobiDB-lite"/>
    </source>
</evidence>
<evidence type="ECO:0000303" key="9">
    <source>
    </source>
</evidence>
<evidence type="ECO:0000305" key="10"/>
<name>BRAF_COTJA</name>
<keyword id="KW-0021">Allosteric enzyme</keyword>
<keyword id="KW-0025">Alternative splicing</keyword>
<keyword id="KW-0067">ATP-binding</keyword>
<keyword id="KW-1003">Cell membrane</keyword>
<keyword id="KW-0963">Cytoplasm</keyword>
<keyword id="KW-0418">Kinase</keyword>
<keyword id="KW-0472">Membrane</keyword>
<keyword id="KW-0479">Metal-binding</keyword>
<keyword id="KW-0547">Nucleotide-binding</keyword>
<keyword id="KW-0539">Nucleus</keyword>
<keyword id="KW-0597">Phosphoprotein</keyword>
<keyword id="KW-0656">Proto-oncogene</keyword>
<keyword id="KW-1185">Reference proteome</keyword>
<keyword id="KW-0723">Serine/threonine-protein kinase</keyword>
<keyword id="KW-0808">Transferase</keyword>
<keyword id="KW-0862">Zinc</keyword>
<keyword id="KW-0863">Zinc-finger</keyword>
<feature type="chain" id="PRO_0000085668" description="Serine/threonine-protein kinase B-raf">
    <location>
        <begin position="1"/>
        <end position="807"/>
    </location>
</feature>
<feature type="domain" description="RBD" evidence="6">
    <location>
        <begin position="155"/>
        <end position="227"/>
    </location>
</feature>
<feature type="domain" description="Protein kinase" evidence="4">
    <location>
        <begin position="497"/>
        <end position="757"/>
    </location>
</feature>
<feature type="zinc finger region" description="Phorbol-ester/DAG-type" evidence="5">
    <location>
        <begin position="234"/>
        <end position="280"/>
    </location>
</feature>
<feature type="region of interest" description="Disordered" evidence="8">
    <location>
        <begin position="1"/>
        <end position="36"/>
    </location>
</feature>
<feature type="region of interest" description="Disordered" evidence="8">
    <location>
        <begin position="104"/>
        <end position="128"/>
    </location>
</feature>
<feature type="region of interest" description="Disordered" evidence="8">
    <location>
        <begin position="303"/>
        <end position="372"/>
    </location>
</feature>
<feature type="region of interest" description="Disordered" evidence="8">
    <location>
        <begin position="434"/>
        <end position="494"/>
    </location>
</feature>
<feature type="compositionally biased region" description="Low complexity" evidence="8">
    <location>
        <begin position="1"/>
        <end position="15"/>
    </location>
</feature>
<feature type="compositionally biased region" description="Low complexity" evidence="8">
    <location>
        <begin position="110"/>
        <end position="128"/>
    </location>
</feature>
<feature type="compositionally biased region" description="Polar residues" evidence="8">
    <location>
        <begin position="303"/>
        <end position="313"/>
    </location>
</feature>
<feature type="compositionally biased region" description="Low complexity" evidence="8">
    <location>
        <begin position="314"/>
        <end position="328"/>
    </location>
</feature>
<feature type="compositionally biased region" description="Basic and acidic residues" evidence="8">
    <location>
        <begin position="348"/>
        <end position="363"/>
    </location>
</feature>
<feature type="compositionally biased region" description="Basic and acidic residues" evidence="8">
    <location>
        <begin position="463"/>
        <end position="487"/>
    </location>
</feature>
<feature type="active site" description="Proton acceptor" evidence="4 7">
    <location>
        <position position="616"/>
    </location>
</feature>
<feature type="binding site" evidence="1">
    <location>
        <position position="235"/>
    </location>
    <ligand>
        <name>Zn(2+)</name>
        <dbReference type="ChEBI" id="CHEBI:29105"/>
        <label>1</label>
    </ligand>
</feature>
<feature type="binding site" evidence="1">
    <location>
        <position position="248"/>
    </location>
    <ligand>
        <name>Zn(2+)</name>
        <dbReference type="ChEBI" id="CHEBI:29105"/>
        <label>2</label>
    </ligand>
</feature>
<feature type="binding site" evidence="1">
    <location>
        <position position="251"/>
    </location>
    <ligand>
        <name>Zn(2+)</name>
        <dbReference type="ChEBI" id="CHEBI:29105"/>
        <label>2</label>
    </ligand>
</feature>
<feature type="binding site" evidence="1">
    <location>
        <position position="261"/>
    </location>
    <ligand>
        <name>Zn(2+)</name>
        <dbReference type="ChEBI" id="CHEBI:29105"/>
        <label>1</label>
    </ligand>
</feature>
<feature type="binding site" evidence="1">
    <location>
        <position position="264"/>
    </location>
    <ligand>
        <name>Zn(2+)</name>
        <dbReference type="ChEBI" id="CHEBI:29105"/>
        <label>1</label>
    </ligand>
</feature>
<feature type="binding site" evidence="1">
    <location>
        <position position="269"/>
    </location>
    <ligand>
        <name>Zn(2+)</name>
        <dbReference type="ChEBI" id="CHEBI:29105"/>
        <label>2</label>
    </ligand>
</feature>
<feature type="binding site" evidence="1">
    <location>
        <position position="272"/>
    </location>
    <ligand>
        <name>Zn(2+)</name>
        <dbReference type="ChEBI" id="CHEBI:29105"/>
        <label>2</label>
    </ligand>
</feature>
<feature type="binding site" evidence="1">
    <location>
        <position position="280"/>
    </location>
    <ligand>
        <name>Zn(2+)</name>
        <dbReference type="ChEBI" id="CHEBI:29105"/>
        <label>1</label>
    </ligand>
</feature>
<feature type="binding site" evidence="4">
    <location>
        <begin position="503"/>
        <end position="511"/>
    </location>
    <ligand>
        <name>ATP</name>
        <dbReference type="ChEBI" id="CHEBI:30616"/>
    </ligand>
</feature>
<feature type="binding site" evidence="4">
    <location>
        <position position="523"/>
    </location>
    <ligand>
        <name>ATP</name>
        <dbReference type="ChEBI" id="CHEBI:30616"/>
    </ligand>
</feature>
<feature type="modified residue" description="Phosphoserine; by MAPK1" evidence="1">
    <location>
        <position position="790"/>
    </location>
</feature>
<feature type="modified residue" description="Phosphothreonine; by MAPK1" evidence="1">
    <location>
        <position position="793"/>
    </location>
</feature>
<feature type="splice variant" id="VSP_004799" description="In isoform Short." evidence="9">
    <location>
        <begin position="393"/>
        <end position="432"/>
    </location>
</feature>
<protein>
    <recommendedName>
        <fullName evidence="2">Serine/threonine-protein kinase B-raf</fullName>
        <ecNumber evidence="2">2.7.11.1</ecNumber>
    </recommendedName>
    <alternativeName>
        <fullName>Proto-oncogene B-Raf</fullName>
    </alternativeName>
    <alternativeName>
        <fullName>Proto-oncogene c-Rmil</fullName>
    </alternativeName>
    <alternativeName>
        <fullName>Serine/threonine-protein kinase Rmil</fullName>
    </alternativeName>
</protein>
<comment type="function">
    <text evidence="3">Protein kinase involved in the activation of the MAP signaling cascade. May play a role in transducing specific signals in neural cells.</text>
</comment>
<comment type="catalytic activity">
    <reaction evidence="2">
        <text>L-seryl-[protein] + ATP = O-phospho-L-seryl-[protein] + ADP + H(+)</text>
        <dbReference type="Rhea" id="RHEA:17989"/>
        <dbReference type="Rhea" id="RHEA-COMP:9863"/>
        <dbReference type="Rhea" id="RHEA-COMP:11604"/>
        <dbReference type="ChEBI" id="CHEBI:15378"/>
        <dbReference type="ChEBI" id="CHEBI:29999"/>
        <dbReference type="ChEBI" id="CHEBI:30616"/>
        <dbReference type="ChEBI" id="CHEBI:83421"/>
        <dbReference type="ChEBI" id="CHEBI:456216"/>
        <dbReference type="EC" id="2.7.11.1"/>
    </reaction>
</comment>
<comment type="catalytic activity">
    <reaction evidence="2">
        <text>L-threonyl-[protein] + ATP = O-phospho-L-threonyl-[protein] + ADP + H(+)</text>
        <dbReference type="Rhea" id="RHEA:46608"/>
        <dbReference type="Rhea" id="RHEA-COMP:11060"/>
        <dbReference type="Rhea" id="RHEA-COMP:11605"/>
        <dbReference type="ChEBI" id="CHEBI:15378"/>
        <dbReference type="ChEBI" id="CHEBI:30013"/>
        <dbReference type="ChEBI" id="CHEBI:30616"/>
        <dbReference type="ChEBI" id="CHEBI:61977"/>
        <dbReference type="ChEBI" id="CHEBI:456216"/>
        <dbReference type="EC" id="2.7.11.1"/>
    </reaction>
</comment>
<comment type="cofactor">
    <cofactor evidence="10">
        <name>Zn(2+)</name>
        <dbReference type="ChEBI" id="CHEBI:29105"/>
    </cofactor>
    <text evidence="10">Binds 2 Zn(2+) ions per subunit.</text>
</comment>
<comment type="activity regulation">
    <text evidence="2">In quiescent cells, maintained in an inactive state via an intramolecular interaction between the protein kinase and N-terminal domains. Following mitogen-mediated cell activation, binds via its RGB domain to active HRAS (GTP-bound) which releases the inhibitory intramolecular interaction between the two domains. This allows the MAP2K1-mediated dimerization of KSR1 or KSR2, and BRAF which activates BRAF.</text>
</comment>
<comment type="subcellular location">
    <subcellularLocation>
        <location>Nucleus</location>
    </subcellularLocation>
    <subcellularLocation>
        <location evidence="1">Cytoplasm</location>
    </subcellularLocation>
    <subcellularLocation>
        <location evidence="1">Cell membrane</location>
    </subcellularLocation>
</comment>
<comment type="alternative products">
    <event type="alternative splicing"/>
    <isoform>
        <id>P34908-1</id>
        <name>Long</name>
        <sequence type="displayed"/>
    </isoform>
    <isoform>
        <id>P34908-2</id>
        <name>Short</name>
        <sequence type="described" ref="VSP_004799"/>
    </isoform>
</comment>
<comment type="tissue specificity">
    <text>Expressed preferentially in neural tissue.</text>
</comment>
<comment type="PTM">
    <text>Phosphorylated.</text>
</comment>
<comment type="similarity">
    <text evidence="10">Belongs to the protein kinase superfamily. TKL Ser/Thr protein kinase family. RAF subfamily.</text>
</comment>
<reference key="1">
    <citation type="journal article" date="1992" name="Oncogene">
        <title>Quail neuroretina c-Rmil(B-raf) proto-oncogene cDNAs encode two proteins of 93.5 and 95 kDa resulting from alternative splicing.</title>
        <authorList>
            <person name="Eychene A."/>
            <person name="Barnier J.V."/>
            <person name="Dezelee P."/>
            <person name="Marx M."/>
            <person name="Laugier D."/>
            <person name="Calogeraki I."/>
            <person name="Calothy G."/>
        </authorList>
    </citation>
    <scope>NUCLEOTIDE SEQUENCE [MRNA] (ISOFORMS LONG AND SHORT)</scope>
</reference>
<gene>
    <name evidence="2" type="primary">BRAF</name>
    <name type="synonym">RMIL</name>
</gene>
<organism>
    <name type="scientific">Coturnix japonica</name>
    <name type="common">Japanese quail</name>
    <name type="synonym">Coturnix coturnix japonica</name>
    <dbReference type="NCBI Taxonomy" id="93934"/>
    <lineage>
        <taxon>Eukaryota</taxon>
        <taxon>Metazoa</taxon>
        <taxon>Chordata</taxon>
        <taxon>Craniata</taxon>
        <taxon>Vertebrata</taxon>
        <taxon>Euteleostomi</taxon>
        <taxon>Archelosauria</taxon>
        <taxon>Archosauria</taxon>
        <taxon>Dinosauria</taxon>
        <taxon>Saurischia</taxon>
        <taxon>Theropoda</taxon>
        <taxon>Coelurosauria</taxon>
        <taxon>Aves</taxon>
        <taxon>Neognathae</taxon>
        <taxon>Galloanserae</taxon>
        <taxon>Galliformes</taxon>
        <taxon>Phasianidae</taxon>
        <taxon>Perdicinae</taxon>
        <taxon>Coturnix</taxon>
    </lineage>
</organism>
<proteinExistence type="evidence at transcript level"/>